<organism>
    <name type="scientific">Brucella suis biovar 1 (strain 1330)</name>
    <dbReference type="NCBI Taxonomy" id="204722"/>
    <lineage>
        <taxon>Bacteria</taxon>
        <taxon>Pseudomonadati</taxon>
        <taxon>Pseudomonadota</taxon>
        <taxon>Alphaproteobacteria</taxon>
        <taxon>Hyphomicrobiales</taxon>
        <taxon>Brucellaceae</taxon>
        <taxon>Brucella/Ochrobactrum group</taxon>
        <taxon>Brucella</taxon>
    </lineage>
</organism>
<reference key="1">
    <citation type="journal article" date="1996" name="Int. J. Syst. Bacteriol.">
        <title>Species-specific sequences at the omp2 locus of Brucella type strains.</title>
        <authorList>
            <person name="Ficht T.A."/>
            <person name="Husseinen H.S."/>
            <person name="Derr J."/>
            <person name="Bearden S.W."/>
        </authorList>
    </citation>
    <scope>NUCLEOTIDE SEQUENCE [GENOMIC DNA]</scope>
    <source>
        <strain>1330</strain>
    </source>
</reference>
<reference key="2">
    <citation type="journal article" date="2002" name="Proc. Natl. Acad. Sci. U.S.A.">
        <title>The Brucella suis genome reveals fundamental similarities between animal and plant pathogens and symbionts.</title>
        <authorList>
            <person name="Paulsen I.T."/>
            <person name="Seshadri R."/>
            <person name="Nelson K.E."/>
            <person name="Eisen J.A."/>
            <person name="Heidelberg J.F."/>
            <person name="Read T.D."/>
            <person name="Dodson R.J."/>
            <person name="Umayam L.A."/>
            <person name="Brinkac L.M."/>
            <person name="Beanan M.J."/>
            <person name="Daugherty S.C."/>
            <person name="DeBoy R.T."/>
            <person name="Durkin A.S."/>
            <person name="Kolonay J.F."/>
            <person name="Madupu R."/>
            <person name="Nelson W.C."/>
            <person name="Ayodeji B."/>
            <person name="Kraul M."/>
            <person name="Shetty J."/>
            <person name="Malek J.A."/>
            <person name="Van Aken S.E."/>
            <person name="Riedmuller S."/>
            <person name="Tettelin H."/>
            <person name="Gill S.R."/>
            <person name="White O."/>
            <person name="Salzberg S.L."/>
            <person name="Hoover D.L."/>
            <person name="Lindler L.E."/>
            <person name="Halling S.M."/>
            <person name="Boyle S.M."/>
            <person name="Fraser C.M."/>
        </authorList>
    </citation>
    <scope>NUCLEOTIDE SEQUENCE [LARGE SCALE GENOMIC DNA]</scope>
    <source>
        <strain>1330</strain>
    </source>
</reference>
<reference key="3">
    <citation type="journal article" date="2011" name="J. Bacteriol.">
        <title>Revised genome sequence of Brucella suis 1330.</title>
        <authorList>
            <person name="Tae H."/>
            <person name="Shallom S."/>
            <person name="Settlage R."/>
            <person name="Preston D."/>
            <person name="Adams L.G."/>
            <person name="Garner H.R."/>
        </authorList>
    </citation>
    <scope>NUCLEOTIDE SEQUENCE [LARGE SCALE GENOMIC DNA]</scope>
    <source>
        <strain>1330</strain>
    </source>
</reference>
<dbReference type="EMBL" id="U26443">
    <property type="protein sequence ID" value="AAA67798.1"/>
    <property type="molecule type" value="Genomic_DNA"/>
</dbReference>
<dbReference type="EMBL" id="AE014291">
    <property type="protein sequence ID" value="AAN29566.1"/>
    <property type="molecule type" value="Genomic_DNA"/>
</dbReference>
<dbReference type="EMBL" id="CP002997">
    <property type="protein sequence ID" value="AEM17983.1"/>
    <property type="molecule type" value="Genomic_DNA"/>
</dbReference>
<dbReference type="RefSeq" id="WP_006190002.1">
    <property type="nucleotide sequence ID" value="NC_004310.3"/>
</dbReference>
<dbReference type="SMR" id="P0DI93"/>
<dbReference type="GeneID" id="45051723"/>
<dbReference type="KEGG" id="bms:BR0637"/>
<dbReference type="KEGG" id="bsi:BS1330_I0633"/>
<dbReference type="PATRIC" id="fig|204722.22.peg.1317"/>
<dbReference type="HOGENOM" id="CLU_044836_0_0_5"/>
<dbReference type="PhylomeDB" id="P0DI93"/>
<dbReference type="Proteomes" id="UP000007104">
    <property type="component" value="Chromosome I"/>
</dbReference>
<dbReference type="GO" id="GO:0009279">
    <property type="term" value="C:cell outer membrane"/>
    <property type="evidence" value="ECO:0007669"/>
    <property type="project" value="UniProtKB-SubCell"/>
</dbReference>
<dbReference type="GO" id="GO:0046930">
    <property type="term" value="C:pore complex"/>
    <property type="evidence" value="ECO:0007669"/>
    <property type="project" value="UniProtKB-KW"/>
</dbReference>
<dbReference type="GO" id="GO:0015288">
    <property type="term" value="F:porin activity"/>
    <property type="evidence" value="ECO:0007669"/>
    <property type="project" value="UniProtKB-KW"/>
</dbReference>
<dbReference type="GO" id="GO:0006811">
    <property type="term" value="P:monoatomic ion transport"/>
    <property type="evidence" value="ECO:0007669"/>
    <property type="project" value="UniProtKB-KW"/>
</dbReference>
<dbReference type="InterPro" id="IPR003684">
    <property type="entry name" value="Porin_alphabac"/>
</dbReference>
<dbReference type="Pfam" id="PF02530">
    <property type="entry name" value="Porin_2"/>
    <property type="match status" value="1"/>
</dbReference>
<dbReference type="SUPFAM" id="SSF56935">
    <property type="entry name" value="Porins"/>
    <property type="match status" value="1"/>
</dbReference>
<proteinExistence type="inferred from homology"/>
<comment type="function">
    <text evidence="2">Forms passive diffusion pores that allow small molecular weight hydrophilic materials across the outer membrane.</text>
</comment>
<comment type="subunit">
    <text evidence="2">Monomer.</text>
</comment>
<comment type="subcellular location">
    <subcellularLocation>
        <location evidence="1">Cell outer membrane</location>
        <topology evidence="2">Multi-pass membrane protein</topology>
    </subcellularLocation>
</comment>
<comment type="domain">
    <text evidence="2">Consists of 16-stranded beta-barrel sheets, with large surface-exposed loops, that form a transmembrane pore at the center of each barrel. The pore is partially ocluded by a peptide loop that folds into the pore lumen.</text>
</comment>
<comment type="miscellaneous">
    <text evidence="2">The pore formed by Omp2a is larger than the one formed by Omp2b. Omp2b pores have optimal permeability to allow growth and protection against harmful compounds. The larger pore formed by Omp2a may be advantageous for intracellular growth, when the bacterium is competing with the host cell for nutrients whose concentration is particularly low within the phagosome.</text>
</comment>
<comment type="similarity">
    <text evidence="4">Belongs to the alphaproteobacteria porin family.</text>
</comment>
<name>OMP2A_BRUSU</name>
<gene>
    <name type="primary">omp2a</name>
    <name type="ordered locus">BR0637</name>
    <name type="ordered locus">BS1330_I0633</name>
</gene>
<protein>
    <recommendedName>
        <fullName>Porin Omp2a</fullName>
    </recommendedName>
</protein>
<keyword id="KW-0998">Cell outer membrane</keyword>
<keyword id="KW-0406">Ion transport</keyword>
<keyword id="KW-0472">Membrane</keyword>
<keyword id="KW-0626">Porin</keyword>
<keyword id="KW-0732">Signal</keyword>
<keyword id="KW-0812">Transmembrane</keyword>
<keyword id="KW-1134">Transmembrane beta strand</keyword>
<keyword id="KW-0813">Transport</keyword>
<feature type="signal peptide" evidence="3">
    <location>
        <begin position="1"/>
        <end position="22"/>
    </location>
</feature>
<feature type="chain" id="PRO_0000354021" description="Porin Omp2a">
    <location>
        <begin position="23"/>
        <end position="367"/>
    </location>
</feature>
<evidence type="ECO:0000250" key="1"/>
<evidence type="ECO:0000250" key="2">
    <source>
        <dbReference type="UniProtKB" id="B2SAB9"/>
    </source>
</evidence>
<evidence type="ECO:0000255" key="3"/>
<evidence type="ECO:0000305" key="4"/>
<sequence>MNIKSLLLGSAAALVAASGAQAADAIVAPEPEAVEYVRVCDAYGAGYFYIPGTETCLRVHGYVRYDVKGGDDVYTGSDRKGWDKGARFALMFNTNSETELGTLGTYTQLRFNYTSNNSRHDGQYGDFSDDRDVADGGVSTGTDLQFAYITLGGFKVGIDESEFHTFTGYLGDVINDDVVAAGSYRTGKIAYTFTGGNGFSAVIALEQGGEDVDNDYTIDGYMPHVVGGLKYAGGWGSIAGAVAYDPVIEEWATKVRGDVNITDRFSVWLQGAYSSAATPNQNYGQWGGDWAVWGGAKFIATEKVTFNLQAAHDDWGKTAVTANVAYQLVPGFTITPEVSYTKFGGEWKDTVAEDNAWGGIVRFQRSF</sequence>
<accession>P0DI93</accession>
<accession>G0K7X8</accession>
<accession>Q45429</accession>
<accession>Q7CEH9</accession>
<accession>Q9EY45</accession>